<protein>
    <recommendedName>
        <fullName evidence="1">Small ribosomal subunit protein uS3</fullName>
    </recommendedName>
    <alternativeName>
        <fullName evidence="2">30S ribosomal protein S3</fullName>
    </alternativeName>
</protein>
<proteinExistence type="inferred from homology"/>
<comment type="function">
    <text evidence="1">Binds the lower part of the 30S subunit head. Binds mRNA in the 70S ribosome, positioning it for translation.</text>
</comment>
<comment type="subunit">
    <text evidence="1">Part of the 30S ribosomal subunit. Forms a tight complex with proteins S10 and S14.</text>
</comment>
<comment type="similarity">
    <text evidence="1">Belongs to the universal ribosomal protein uS3 family.</text>
</comment>
<comment type="sequence caution" evidence="2">
    <conflict type="erroneous initiation">
        <sequence resource="EMBL-CDS" id="CAI27126"/>
    </conflict>
</comment>
<name>RS3_EHRRW</name>
<gene>
    <name evidence="1" type="primary">rpsC</name>
    <name type="ordered locus">Erum6010</name>
    <name type="ordered locus">ERWE_CDS_06320</name>
</gene>
<sequence>MGQKSNPIGLRLKIINTWDSLWYANKDYTTKLHEDFLLRKFIKKAFYHASISKVVIARKVDVIMVNVYSAKPGVIIGKKGADIDKVKQKIVKMINNNIELNIIEVKKPELKAILIAENIAQQLERRVSFRRAMKRSVQNCLKIGAKGIKVSCAGRLGGAEIARTEWYKEGSVPLHTFRANIDYGFSEAKTIYGIIGVKVWVYLGETKSSNE</sequence>
<feature type="chain" id="PRO_0000230699" description="Small ribosomal subunit protein uS3">
    <location>
        <begin position="1"/>
        <end position="211"/>
    </location>
</feature>
<feature type="domain" description="KH type-2" evidence="1">
    <location>
        <begin position="38"/>
        <end position="106"/>
    </location>
</feature>
<organism>
    <name type="scientific">Ehrlichia ruminantium (strain Welgevonden)</name>
    <dbReference type="NCBI Taxonomy" id="254945"/>
    <lineage>
        <taxon>Bacteria</taxon>
        <taxon>Pseudomonadati</taxon>
        <taxon>Pseudomonadota</taxon>
        <taxon>Alphaproteobacteria</taxon>
        <taxon>Rickettsiales</taxon>
        <taxon>Anaplasmataceae</taxon>
        <taxon>Ehrlichia</taxon>
    </lineage>
</organism>
<reference key="1">
    <citation type="journal article" date="2005" name="Proc. Natl. Acad. Sci. U.S.A.">
        <title>The genome of the heartwater agent Ehrlichia ruminantium contains multiple tandem repeats of actively variable copy number.</title>
        <authorList>
            <person name="Collins N.E."/>
            <person name="Liebenberg J."/>
            <person name="de Villiers E.P."/>
            <person name="Brayton K.A."/>
            <person name="Louw E."/>
            <person name="Pretorius A."/>
            <person name="Faber F.E."/>
            <person name="van Heerden H."/>
            <person name="Josemans A."/>
            <person name="van Kleef M."/>
            <person name="Steyn H.C."/>
            <person name="van Strijp M.F."/>
            <person name="Zweygarth E."/>
            <person name="Jongejan F."/>
            <person name="Maillard J.C."/>
            <person name="Berthier D."/>
            <person name="Botha M."/>
            <person name="Joubert F."/>
            <person name="Corton C.H."/>
            <person name="Thomson N.R."/>
            <person name="Allsopp M.T."/>
            <person name="Allsopp B.A."/>
        </authorList>
    </citation>
    <scope>NUCLEOTIDE SEQUENCE [LARGE SCALE GENOMIC DNA]</scope>
    <source>
        <strain>Welgevonden</strain>
    </source>
</reference>
<reference key="2">
    <citation type="journal article" date="2006" name="J. Bacteriol.">
        <title>Comparative genomic analysis of three strains of Ehrlichia ruminantium reveals an active process of genome size plasticity.</title>
        <authorList>
            <person name="Frutos R."/>
            <person name="Viari A."/>
            <person name="Ferraz C."/>
            <person name="Morgat A."/>
            <person name="Eychenie S."/>
            <person name="Kandassamy Y."/>
            <person name="Chantal I."/>
            <person name="Bensaid A."/>
            <person name="Coissac E."/>
            <person name="Vachiery N."/>
            <person name="Demaille J."/>
            <person name="Martinez D."/>
        </authorList>
    </citation>
    <scope>NUCLEOTIDE SEQUENCE [LARGE SCALE GENOMIC DNA]</scope>
    <source>
        <strain>Welgevonden</strain>
    </source>
</reference>
<evidence type="ECO:0000255" key="1">
    <source>
        <dbReference type="HAMAP-Rule" id="MF_01309"/>
    </source>
</evidence>
<evidence type="ECO:0000305" key="2"/>
<accession>Q5HAS8</accession>
<accession>Q5FD64</accession>
<dbReference type="EMBL" id="CR767821">
    <property type="protein sequence ID" value="CAH58333.1"/>
    <property type="molecule type" value="Genomic_DNA"/>
</dbReference>
<dbReference type="EMBL" id="CR925678">
    <property type="protein sequence ID" value="CAI27126.1"/>
    <property type="status" value="ALT_INIT"/>
    <property type="molecule type" value="Genomic_DNA"/>
</dbReference>
<dbReference type="RefSeq" id="WP_011155283.1">
    <property type="nucleotide sequence ID" value="NC_005295.2"/>
</dbReference>
<dbReference type="SMR" id="Q5HAS8"/>
<dbReference type="GeneID" id="33057504"/>
<dbReference type="KEGG" id="eru:Erum6010"/>
<dbReference type="KEGG" id="erw:ERWE_CDS_06320"/>
<dbReference type="eggNOG" id="COG0092">
    <property type="taxonomic scope" value="Bacteria"/>
</dbReference>
<dbReference type="HOGENOM" id="CLU_058591_0_2_5"/>
<dbReference type="Proteomes" id="UP000001021">
    <property type="component" value="Chromosome"/>
</dbReference>
<dbReference type="GO" id="GO:0022627">
    <property type="term" value="C:cytosolic small ribosomal subunit"/>
    <property type="evidence" value="ECO:0007669"/>
    <property type="project" value="TreeGrafter"/>
</dbReference>
<dbReference type="GO" id="GO:0003729">
    <property type="term" value="F:mRNA binding"/>
    <property type="evidence" value="ECO:0007669"/>
    <property type="project" value="UniProtKB-UniRule"/>
</dbReference>
<dbReference type="GO" id="GO:0019843">
    <property type="term" value="F:rRNA binding"/>
    <property type="evidence" value="ECO:0007669"/>
    <property type="project" value="UniProtKB-UniRule"/>
</dbReference>
<dbReference type="GO" id="GO:0003735">
    <property type="term" value="F:structural constituent of ribosome"/>
    <property type="evidence" value="ECO:0007669"/>
    <property type="project" value="InterPro"/>
</dbReference>
<dbReference type="GO" id="GO:0006412">
    <property type="term" value="P:translation"/>
    <property type="evidence" value="ECO:0007669"/>
    <property type="project" value="UniProtKB-UniRule"/>
</dbReference>
<dbReference type="CDD" id="cd02412">
    <property type="entry name" value="KH-II_30S_S3"/>
    <property type="match status" value="1"/>
</dbReference>
<dbReference type="FunFam" id="3.30.1140.32:FF:000002">
    <property type="entry name" value="30S ribosomal protein S3"/>
    <property type="match status" value="1"/>
</dbReference>
<dbReference type="FunFam" id="3.30.300.20:FF:000001">
    <property type="entry name" value="30S ribosomal protein S3"/>
    <property type="match status" value="1"/>
</dbReference>
<dbReference type="Gene3D" id="3.30.300.20">
    <property type="match status" value="1"/>
</dbReference>
<dbReference type="Gene3D" id="3.30.1140.32">
    <property type="entry name" value="Ribosomal protein S3, C-terminal domain"/>
    <property type="match status" value="1"/>
</dbReference>
<dbReference type="HAMAP" id="MF_01309_B">
    <property type="entry name" value="Ribosomal_uS3_B"/>
    <property type="match status" value="1"/>
</dbReference>
<dbReference type="InterPro" id="IPR004087">
    <property type="entry name" value="KH_dom"/>
</dbReference>
<dbReference type="InterPro" id="IPR015946">
    <property type="entry name" value="KH_dom-like_a/b"/>
</dbReference>
<dbReference type="InterPro" id="IPR004044">
    <property type="entry name" value="KH_dom_type_2"/>
</dbReference>
<dbReference type="InterPro" id="IPR009019">
    <property type="entry name" value="KH_sf_prok-type"/>
</dbReference>
<dbReference type="InterPro" id="IPR036419">
    <property type="entry name" value="Ribosomal_S3_C_sf"/>
</dbReference>
<dbReference type="InterPro" id="IPR005704">
    <property type="entry name" value="Ribosomal_uS3_bac-typ"/>
</dbReference>
<dbReference type="InterPro" id="IPR001351">
    <property type="entry name" value="Ribosomal_uS3_C"/>
</dbReference>
<dbReference type="InterPro" id="IPR018280">
    <property type="entry name" value="Ribosomal_uS3_CS"/>
</dbReference>
<dbReference type="NCBIfam" id="TIGR01009">
    <property type="entry name" value="rpsC_bact"/>
    <property type="match status" value="1"/>
</dbReference>
<dbReference type="PANTHER" id="PTHR11760">
    <property type="entry name" value="30S/40S RIBOSOMAL PROTEIN S3"/>
    <property type="match status" value="1"/>
</dbReference>
<dbReference type="PANTHER" id="PTHR11760:SF19">
    <property type="entry name" value="SMALL RIBOSOMAL SUBUNIT PROTEIN US3C"/>
    <property type="match status" value="1"/>
</dbReference>
<dbReference type="Pfam" id="PF07650">
    <property type="entry name" value="KH_2"/>
    <property type="match status" value="1"/>
</dbReference>
<dbReference type="Pfam" id="PF00189">
    <property type="entry name" value="Ribosomal_S3_C"/>
    <property type="match status" value="1"/>
</dbReference>
<dbReference type="SMART" id="SM00322">
    <property type="entry name" value="KH"/>
    <property type="match status" value="1"/>
</dbReference>
<dbReference type="SUPFAM" id="SSF54814">
    <property type="entry name" value="Prokaryotic type KH domain (KH-domain type II)"/>
    <property type="match status" value="1"/>
</dbReference>
<dbReference type="SUPFAM" id="SSF54821">
    <property type="entry name" value="Ribosomal protein S3 C-terminal domain"/>
    <property type="match status" value="1"/>
</dbReference>
<dbReference type="PROSITE" id="PS50823">
    <property type="entry name" value="KH_TYPE_2"/>
    <property type="match status" value="1"/>
</dbReference>
<dbReference type="PROSITE" id="PS00548">
    <property type="entry name" value="RIBOSOMAL_S3"/>
    <property type="match status" value="1"/>
</dbReference>
<keyword id="KW-0687">Ribonucleoprotein</keyword>
<keyword id="KW-0689">Ribosomal protein</keyword>
<keyword id="KW-0694">RNA-binding</keyword>
<keyword id="KW-0699">rRNA-binding</keyword>